<organism>
    <name type="scientific">Oryctolagus cuniculus</name>
    <name type="common">Rabbit</name>
    <dbReference type="NCBI Taxonomy" id="9986"/>
    <lineage>
        <taxon>Eukaryota</taxon>
        <taxon>Metazoa</taxon>
        <taxon>Chordata</taxon>
        <taxon>Craniata</taxon>
        <taxon>Vertebrata</taxon>
        <taxon>Euteleostomi</taxon>
        <taxon>Mammalia</taxon>
        <taxon>Eutheria</taxon>
        <taxon>Euarchontoglires</taxon>
        <taxon>Glires</taxon>
        <taxon>Lagomorpha</taxon>
        <taxon>Leporidae</taxon>
        <taxon>Oryctolagus</taxon>
    </lineage>
</organism>
<evidence type="ECO:0000250" key="1"/>
<evidence type="ECO:0000250" key="2">
    <source>
        <dbReference type="UniProtKB" id="P19139"/>
    </source>
</evidence>
<evidence type="ECO:0000250" key="3">
    <source>
        <dbReference type="UniProtKB" id="P68400"/>
    </source>
</evidence>
<evidence type="ECO:0000255" key="4">
    <source>
        <dbReference type="PROSITE-ProRule" id="PRU00159"/>
    </source>
</evidence>
<evidence type="ECO:0000255" key="5">
    <source>
        <dbReference type="PROSITE-ProRule" id="PRU10027"/>
    </source>
</evidence>
<dbReference type="EC" id="2.7.11.1" evidence="3"/>
<dbReference type="EMBL" id="S56527">
    <property type="protein sequence ID" value="AAB25554.1"/>
    <property type="molecule type" value="mRNA"/>
</dbReference>
<dbReference type="EMBL" id="M98451">
    <property type="protein sequence ID" value="AAA91891.1"/>
    <property type="molecule type" value="mRNA"/>
</dbReference>
<dbReference type="PIR" id="JN0555">
    <property type="entry name" value="JN0555"/>
</dbReference>
<dbReference type="RefSeq" id="NP_001153756.1">
    <property type="nucleotide sequence ID" value="NM_001160284.1"/>
</dbReference>
<dbReference type="SMR" id="P33674"/>
<dbReference type="FunCoup" id="P33674">
    <property type="interactions" value="3067"/>
</dbReference>
<dbReference type="STRING" id="9986.ENSOCUP00000019122"/>
<dbReference type="iPTMnet" id="P33674"/>
<dbReference type="PaxDb" id="9986-ENSOCUP00000019122"/>
<dbReference type="GeneID" id="100301533"/>
<dbReference type="KEGG" id="ocu:100301533"/>
<dbReference type="CTD" id="1457"/>
<dbReference type="eggNOG" id="KOG0668">
    <property type="taxonomic scope" value="Eukaryota"/>
</dbReference>
<dbReference type="InParanoid" id="P33674"/>
<dbReference type="OrthoDB" id="10254671at2759"/>
<dbReference type="BRENDA" id="2.7.11.1">
    <property type="organism ID" value="1749"/>
</dbReference>
<dbReference type="Proteomes" id="UP000001811">
    <property type="component" value="Unplaced"/>
</dbReference>
<dbReference type="GO" id="GO:0005829">
    <property type="term" value="C:cytosol"/>
    <property type="evidence" value="ECO:0007669"/>
    <property type="project" value="TreeGrafter"/>
</dbReference>
<dbReference type="GO" id="GO:0005634">
    <property type="term" value="C:nucleus"/>
    <property type="evidence" value="ECO:0007669"/>
    <property type="project" value="UniProtKB-SubCell"/>
</dbReference>
<dbReference type="GO" id="GO:0005956">
    <property type="term" value="C:protein kinase CK2 complex"/>
    <property type="evidence" value="ECO:0007669"/>
    <property type="project" value="TreeGrafter"/>
</dbReference>
<dbReference type="GO" id="GO:0005524">
    <property type="term" value="F:ATP binding"/>
    <property type="evidence" value="ECO:0007669"/>
    <property type="project" value="UniProtKB-KW"/>
</dbReference>
<dbReference type="GO" id="GO:0106310">
    <property type="term" value="F:protein serine kinase activity"/>
    <property type="evidence" value="ECO:0007669"/>
    <property type="project" value="RHEA"/>
</dbReference>
<dbReference type="GO" id="GO:0004674">
    <property type="term" value="F:protein serine/threonine kinase activity"/>
    <property type="evidence" value="ECO:0000250"/>
    <property type="project" value="UniProtKB"/>
</dbReference>
<dbReference type="GO" id="GO:0006915">
    <property type="term" value="P:apoptotic process"/>
    <property type="evidence" value="ECO:0007669"/>
    <property type="project" value="UniProtKB-KW"/>
</dbReference>
<dbReference type="GO" id="GO:0006302">
    <property type="term" value="P:double-strand break repair"/>
    <property type="evidence" value="ECO:0000250"/>
    <property type="project" value="UniProtKB"/>
</dbReference>
<dbReference type="GO" id="GO:2001234">
    <property type="term" value="P:negative regulation of apoptotic signaling pathway"/>
    <property type="evidence" value="ECO:0000250"/>
    <property type="project" value="UniProtKB"/>
</dbReference>
<dbReference type="GO" id="GO:2000042">
    <property type="term" value="P:negative regulation of double-strand break repair via homologous recombination"/>
    <property type="evidence" value="ECO:0000250"/>
    <property type="project" value="UniProtKB"/>
</dbReference>
<dbReference type="GO" id="GO:1905337">
    <property type="term" value="P:positive regulation of aggrephagy"/>
    <property type="evidence" value="ECO:0000250"/>
    <property type="project" value="UniProtKB"/>
</dbReference>
<dbReference type="GO" id="GO:0030307">
    <property type="term" value="P:positive regulation of cell growth"/>
    <property type="evidence" value="ECO:0000250"/>
    <property type="project" value="UniProtKB"/>
</dbReference>
<dbReference type="GO" id="GO:0008284">
    <property type="term" value="P:positive regulation of cell population proliferation"/>
    <property type="evidence" value="ECO:0000250"/>
    <property type="project" value="UniProtKB"/>
</dbReference>
<dbReference type="GO" id="GO:0045732">
    <property type="term" value="P:positive regulation of protein catabolic process"/>
    <property type="evidence" value="ECO:0000250"/>
    <property type="project" value="UniProtKB"/>
</dbReference>
<dbReference type="GO" id="GO:0030177">
    <property type="term" value="P:positive regulation of Wnt signaling pathway"/>
    <property type="evidence" value="ECO:0000250"/>
    <property type="project" value="UniProtKB"/>
</dbReference>
<dbReference type="GO" id="GO:1905818">
    <property type="term" value="P:regulation of chromosome separation"/>
    <property type="evidence" value="ECO:0000250"/>
    <property type="project" value="UniProtKB"/>
</dbReference>
<dbReference type="GO" id="GO:0048511">
    <property type="term" value="P:rhythmic process"/>
    <property type="evidence" value="ECO:0007669"/>
    <property type="project" value="UniProtKB-KW"/>
</dbReference>
<dbReference type="GO" id="GO:0016055">
    <property type="term" value="P:Wnt signaling pathway"/>
    <property type="evidence" value="ECO:0007669"/>
    <property type="project" value="UniProtKB-KW"/>
</dbReference>
<dbReference type="CDD" id="cd14132">
    <property type="entry name" value="STKc_CK2_alpha"/>
    <property type="match status" value="1"/>
</dbReference>
<dbReference type="FunFam" id="1.10.510.10:FF:000059">
    <property type="entry name" value="Casein kinase II subunit alpha"/>
    <property type="match status" value="1"/>
</dbReference>
<dbReference type="FunFam" id="3.30.200.20:FF:000088">
    <property type="entry name" value="Casein kinase II subunit alpha"/>
    <property type="match status" value="1"/>
</dbReference>
<dbReference type="Gene3D" id="3.30.200.20">
    <property type="entry name" value="Phosphorylase Kinase, domain 1"/>
    <property type="match status" value="2"/>
</dbReference>
<dbReference type="Gene3D" id="1.10.510.10">
    <property type="entry name" value="Transferase(Phosphotransferase) domain 1"/>
    <property type="match status" value="1"/>
</dbReference>
<dbReference type="InterPro" id="IPR045216">
    <property type="entry name" value="CK2_alpha"/>
</dbReference>
<dbReference type="InterPro" id="IPR011009">
    <property type="entry name" value="Kinase-like_dom_sf"/>
</dbReference>
<dbReference type="InterPro" id="IPR000719">
    <property type="entry name" value="Prot_kinase_dom"/>
</dbReference>
<dbReference type="InterPro" id="IPR017441">
    <property type="entry name" value="Protein_kinase_ATP_BS"/>
</dbReference>
<dbReference type="InterPro" id="IPR008271">
    <property type="entry name" value="Ser/Thr_kinase_AS"/>
</dbReference>
<dbReference type="PANTHER" id="PTHR24054">
    <property type="entry name" value="CASEIN KINASE II SUBUNIT ALPHA"/>
    <property type="match status" value="1"/>
</dbReference>
<dbReference type="PANTHER" id="PTHR24054:SF16">
    <property type="entry name" value="CASEIN KINASE II SUBUNIT ALPHA-RELATED"/>
    <property type="match status" value="1"/>
</dbReference>
<dbReference type="Pfam" id="PF00069">
    <property type="entry name" value="Pkinase"/>
    <property type="match status" value="1"/>
</dbReference>
<dbReference type="SMART" id="SM00220">
    <property type="entry name" value="S_TKc"/>
    <property type="match status" value="1"/>
</dbReference>
<dbReference type="SUPFAM" id="SSF56112">
    <property type="entry name" value="Protein kinase-like (PK-like)"/>
    <property type="match status" value="1"/>
</dbReference>
<dbReference type="PROSITE" id="PS00107">
    <property type="entry name" value="PROTEIN_KINASE_ATP"/>
    <property type="match status" value="1"/>
</dbReference>
<dbReference type="PROSITE" id="PS50011">
    <property type="entry name" value="PROTEIN_KINASE_DOM"/>
    <property type="match status" value="1"/>
</dbReference>
<dbReference type="PROSITE" id="PS00108">
    <property type="entry name" value="PROTEIN_KINASE_ST"/>
    <property type="match status" value="1"/>
</dbReference>
<keyword id="KW-0053">Apoptosis</keyword>
<keyword id="KW-0067">ATP-binding</keyword>
<keyword id="KW-0090">Biological rhythms</keyword>
<keyword id="KW-0131">Cell cycle</keyword>
<keyword id="KW-0418">Kinase</keyword>
<keyword id="KW-0547">Nucleotide-binding</keyword>
<keyword id="KW-0539">Nucleus</keyword>
<keyword id="KW-0597">Phosphoprotein</keyword>
<keyword id="KW-1185">Reference proteome</keyword>
<keyword id="KW-0723">Serine/threonine-protein kinase</keyword>
<keyword id="KW-0804">Transcription</keyword>
<keyword id="KW-0805">Transcription regulation</keyword>
<keyword id="KW-0808">Transferase</keyword>
<keyword id="KW-0879">Wnt signaling pathway</keyword>
<gene>
    <name type="primary">CSNK2A1</name>
</gene>
<protein>
    <recommendedName>
        <fullName>Casein kinase II subunit alpha</fullName>
        <shortName>CK II alpha</shortName>
        <ecNumber evidence="3">2.7.11.1</ecNumber>
    </recommendedName>
</protein>
<reference key="1">
    <citation type="journal article" date="1993" name="Gene">
        <title>PCR cloning and sequence of two cDNAs encoding the alpha and beta subunits of rabbit casein kinase-II.</title>
        <authorList>
            <person name="Gupta S.K."/>
            <person name="Singh J.P."/>
        </authorList>
    </citation>
    <scope>NUCLEOTIDE SEQUENCE [MRNA]</scope>
</reference>
<reference key="2">
    <citation type="submission" date="1996-03" db="EMBL/GenBank/DDBJ databases">
        <authorList>
            <person name="Gupta S.K."/>
            <person name="Rothfuss K.J."/>
            <person name="Singh J.P."/>
        </authorList>
    </citation>
    <scope>NUCLEOTIDE SEQUENCE [MRNA]</scope>
    <source>
        <strain>New Zealand white</strain>
    </source>
</reference>
<accession>P33674</accession>
<proteinExistence type="evidence at transcript level"/>
<comment type="function">
    <text evidence="2 3">Catalytic subunit of a constitutively active serine/threonine-protein kinase complex that phosphorylates a large number of substrates containing acidic residues C-terminal to the phosphorylated serine or threonine. Regulates numerous cellular processes, such as cell cycle progression, apoptosis and transcription, as well as viral infection. May act as a regulatory node which integrates and coordinates numerous signals leading to an appropriate cellular response. During mitosis, functions as a component of the p53/TP53-dependent spindle assembly checkpoint (SAC) that maintains cyclin-B-CDK1 activity and G2 arrest in response to spindle damage. Also required for p53/TP53-mediated apoptosis, phosphorylating 'Ser-392' of p53/TP53 following UV irradiation. Phosphorylates a number of DNA repair proteins in response to DNA damage, such as MDC1, MRE11, RAD9A, RAD51 and HTATSF1, promoting their recruitment to DNA damage sites. Can also negatively regulate apoptosis. Phosphorylates the caspases CASP9 and CASP2 and the apoptotic regulator NOL3. Phosphorylation protects CASP9 from cleavage and activation by CASP8, and inhibits the dimerization of CASP2 and activation of CASP8. Phosphorylates YY1, protecting YY1 from cleavage by CASP7 during apoptosis. Regulates transcription by direct phosphorylation of RNA polymerases I, II, III and IV. Also phosphorylates and regulates numerous transcription factors including NF-kappa-B, STAT1, CREB1, IRF1, IRF2, ATF1, ATF4, SRF, MAX, JUN, FOS, MYC and MYB. Phosphorylates Hsp90 and its co-chaperones FKBP4 and CDC37, which is essential for chaperone function. Mediates sequential phosphorylation of FNIP1, promoting its gradual interaction with Hsp90, leading to activate both kinase and non-kinase client proteins of Hsp90. Regulates Wnt signaling by phosphorylating CTNNB1 and the transcription factor LEF1. Acts as an ectokinase that phosphorylates several extracellular proteins. Phosphorylates PML at 'Ser-565' and primes it for ubiquitin-mediated degradation (By similarity). Plays an important role in the circadian clock function by phosphorylating BMAL1 at 'Ser-90' which is pivotal for its interaction with CLOCK and which controls CLOCK nuclear entry (By similarity). Phosphorylates FMR1, promoting FMR1-dependent formation of a membraneless compartment (By similarity). May phosphorylate histone H2A on 'Ser-1' (By similarity).</text>
</comment>
<comment type="catalytic activity">
    <reaction evidence="3">
        <text>L-seryl-[protein] + ATP = O-phospho-L-seryl-[protein] + ADP + H(+)</text>
        <dbReference type="Rhea" id="RHEA:17989"/>
        <dbReference type="Rhea" id="RHEA-COMP:9863"/>
        <dbReference type="Rhea" id="RHEA-COMP:11604"/>
        <dbReference type="ChEBI" id="CHEBI:15378"/>
        <dbReference type="ChEBI" id="CHEBI:29999"/>
        <dbReference type="ChEBI" id="CHEBI:30616"/>
        <dbReference type="ChEBI" id="CHEBI:83421"/>
        <dbReference type="ChEBI" id="CHEBI:456216"/>
        <dbReference type="EC" id="2.7.11.1"/>
    </reaction>
    <physiologicalReaction direction="left-to-right" evidence="3">
        <dbReference type="Rhea" id="RHEA:17990"/>
    </physiologicalReaction>
</comment>
<comment type="catalytic activity">
    <reaction evidence="3">
        <text>L-threonyl-[protein] + ATP = O-phospho-L-threonyl-[protein] + ADP + H(+)</text>
        <dbReference type="Rhea" id="RHEA:46608"/>
        <dbReference type="Rhea" id="RHEA-COMP:11060"/>
        <dbReference type="Rhea" id="RHEA-COMP:11605"/>
        <dbReference type="ChEBI" id="CHEBI:15378"/>
        <dbReference type="ChEBI" id="CHEBI:30013"/>
        <dbReference type="ChEBI" id="CHEBI:30616"/>
        <dbReference type="ChEBI" id="CHEBI:61977"/>
        <dbReference type="ChEBI" id="CHEBI:456216"/>
        <dbReference type="EC" id="2.7.11.1"/>
    </reaction>
</comment>
<comment type="activity regulation">
    <text evidence="1">Constitutively active protein kinase whose activity is not directly affected by phosphorylation. Seems to be regulated by level of expression and localization (By similarity).</text>
</comment>
<comment type="subunit">
    <text evidence="3">Heterotetramer composed of two catalytic subunits (alpha chain and/or alpha' chain) and two regulatory subunits (beta chains). The tetramer can exist as a combination of 2 alpha/2 beta, 2 alpha'/2 beta or 1 alpha/1 alpha'/2 beta subunits. Also part of a CK2-SPT16-SSRP1 complex composed of SSRP1, SUPT16H, CSNK2A1, CSNK2A2 and CSNK2B, which forms following UV irradiation. Interacts with RNPS1. Interacts with SNAI1. Interacts with PML. Interacts with CCAR2. Interacts with HIRIP3 (By similarity).</text>
</comment>
<comment type="subcellular location">
    <subcellularLocation>
        <location evidence="3">Nucleus</location>
    </subcellularLocation>
</comment>
<comment type="PTM">
    <text evidence="1">Phosphorylated at Thr-344, Thr-360, Ser-362 and Ser-370 by CDK1 in prophase and metaphase and dephosphorylated during anaphase. Phosphorylation does not directly affect casein kinase 2 activity, but may contribute to its regulation by forming binding sites for interacting proteins and/or targeting it to different compartments (By similarity).</text>
</comment>
<comment type="miscellaneous">
    <text>Can use both ATP and GTP as phosphoryl donors. Phosphorylation by casein kinase 2 has been estimated to represent up to one quarter of the eukaryotic phosphoproteome.</text>
</comment>
<comment type="similarity">
    <text evidence="4">Belongs to the protein kinase superfamily. Ser/Thr protein kinase family. CK2 subfamily.</text>
</comment>
<sequence length="391" mass="45116">MSGPVPSRVRVYTDVNTHRPREYWDYESHVVEWGNQDDYQLVRKLGRGKYSEVFEAINITNNEKVVVKILKPVKKKKIKREIKILENLRGGPNIITLADIVKDPASRTPALAFEHVNNTDFKQLYQTLTDYDIRFYMYEILKALDYCHSMGIMHRDVKPHNVMIDHEHRKLRLIDWGLAEFYHPGQEYNVRVASRYFKGPELLVDYQMYDYSLDMWSLGCMLASMIFRKEPFFHGHDNYDQLVRIAKVLGTEDLYDYIDKYNIELDPRFNDILGRHSRKRWERFVHSENQHLVSPEALDFLDKLLRYDHQSRLTAREAMEHPYFYTVVKDQARMGSSSMPGGSTPVSSANMMSGISSVPTPSPLGPLAGSPVIAAANPLGMPVPAAAGAQQ</sequence>
<feature type="chain" id="PRO_0000085885" description="Casein kinase II subunit alpha">
    <location>
        <begin position="1"/>
        <end position="391"/>
    </location>
</feature>
<feature type="domain" description="Protein kinase" evidence="4">
    <location>
        <begin position="39"/>
        <end position="324"/>
    </location>
</feature>
<feature type="region of interest" description="Interaction with beta subunit" evidence="1">
    <location>
        <begin position="36"/>
        <end position="41"/>
    </location>
</feature>
<feature type="active site" description="Proton acceptor" evidence="4 5">
    <location>
        <position position="156"/>
    </location>
</feature>
<feature type="binding site" evidence="4">
    <location>
        <begin position="45"/>
        <end position="53"/>
    </location>
    <ligand>
        <name>ATP</name>
        <dbReference type="ChEBI" id="CHEBI:30616"/>
    </ligand>
</feature>
<feature type="binding site" evidence="4">
    <location>
        <position position="68"/>
    </location>
    <ligand>
        <name>ATP</name>
        <dbReference type="ChEBI" id="CHEBI:30616"/>
    </ligand>
</feature>
<feature type="modified residue" description="Phosphothreonine; by CDK1" evidence="3">
    <location>
        <position position="344"/>
    </location>
</feature>
<feature type="modified residue" description="Phosphothreonine; by CDK1" evidence="3">
    <location>
        <position position="360"/>
    </location>
</feature>
<feature type="modified residue" description="Phosphoserine; by CDK1" evidence="3">
    <location>
        <position position="362"/>
    </location>
</feature>
<feature type="modified residue" description="Phosphoserine; by CDK1" evidence="3">
    <location>
        <position position="370"/>
    </location>
</feature>
<name>CSK21_RABIT</name>